<dbReference type="EMBL" id="AE000516">
    <property type="protein sequence ID" value="AAK46609.1"/>
    <property type="molecule type" value="Genomic_DNA"/>
</dbReference>
<dbReference type="PIR" id="E70729">
    <property type="entry name" value="E70729"/>
</dbReference>
<dbReference type="RefSeq" id="WP_003899241.1">
    <property type="nucleotide sequence ID" value="NZ_KK341227.1"/>
</dbReference>
<dbReference type="SMR" id="P9WLG2"/>
<dbReference type="KEGG" id="mtc:MT2327"/>
<dbReference type="PATRIC" id="fig|83331.31.peg.2502"/>
<dbReference type="HOGENOM" id="CLU_040020_2_0_11"/>
<dbReference type="Proteomes" id="UP000001020">
    <property type="component" value="Chromosome"/>
</dbReference>
<dbReference type="GO" id="GO:0005886">
    <property type="term" value="C:plasma membrane"/>
    <property type="evidence" value="ECO:0007669"/>
    <property type="project" value="UniProtKB-SubCell"/>
</dbReference>
<dbReference type="GO" id="GO:0022857">
    <property type="term" value="F:transmembrane transporter activity"/>
    <property type="evidence" value="ECO:0007669"/>
    <property type="project" value="InterPro"/>
</dbReference>
<dbReference type="CDD" id="cd17370">
    <property type="entry name" value="MFS_MJ1317_like"/>
    <property type="match status" value="1"/>
</dbReference>
<dbReference type="Gene3D" id="1.20.1250.20">
    <property type="entry name" value="MFS general substrate transporter like domains"/>
    <property type="match status" value="2"/>
</dbReference>
<dbReference type="InterPro" id="IPR011701">
    <property type="entry name" value="MFS"/>
</dbReference>
<dbReference type="InterPro" id="IPR036259">
    <property type="entry name" value="MFS_trans_sf"/>
</dbReference>
<dbReference type="InterPro" id="IPR052425">
    <property type="entry name" value="Uncharacterized_MFS-type"/>
</dbReference>
<dbReference type="PANTHER" id="PTHR42688:SF1">
    <property type="entry name" value="BLR5212 PROTEIN"/>
    <property type="match status" value="1"/>
</dbReference>
<dbReference type="PANTHER" id="PTHR42688">
    <property type="entry name" value="CONSERVED PROTEIN"/>
    <property type="match status" value="1"/>
</dbReference>
<dbReference type="Pfam" id="PF07690">
    <property type="entry name" value="MFS_1"/>
    <property type="match status" value="1"/>
</dbReference>
<dbReference type="SUPFAM" id="SSF103473">
    <property type="entry name" value="MFS general substrate transporter"/>
    <property type="match status" value="1"/>
</dbReference>
<feature type="chain" id="PRO_0000427484" description="Uncharacterized protein MT2327">
    <location>
        <begin position="1"/>
        <end position="409"/>
    </location>
</feature>
<feature type="transmembrane region" description="Helical" evidence="1">
    <location>
        <begin position="18"/>
        <end position="38"/>
    </location>
</feature>
<feature type="transmembrane region" description="Helical" evidence="1">
    <location>
        <begin position="47"/>
        <end position="67"/>
    </location>
</feature>
<feature type="transmembrane region" description="Helical" evidence="1">
    <location>
        <begin position="100"/>
        <end position="120"/>
    </location>
</feature>
<feature type="transmembrane region" description="Helical" evidence="1">
    <location>
        <begin position="159"/>
        <end position="179"/>
    </location>
</feature>
<feature type="transmembrane region" description="Helical" evidence="1">
    <location>
        <begin position="180"/>
        <end position="200"/>
    </location>
</feature>
<feature type="transmembrane region" description="Helical" evidence="1">
    <location>
        <begin position="232"/>
        <end position="252"/>
    </location>
</feature>
<feature type="transmembrane region" description="Helical" evidence="1">
    <location>
        <begin position="260"/>
        <end position="280"/>
    </location>
</feature>
<feature type="transmembrane region" description="Helical" evidence="1">
    <location>
        <begin position="302"/>
        <end position="322"/>
    </location>
</feature>
<feature type="transmembrane region" description="Helical" evidence="1">
    <location>
        <begin position="355"/>
        <end position="375"/>
    </location>
</feature>
<feature type="transmembrane region" description="Helical" evidence="1">
    <location>
        <begin position="380"/>
        <end position="400"/>
    </location>
</feature>
<reference key="1">
    <citation type="journal article" date="2002" name="J. Bacteriol.">
        <title>Whole-genome comparison of Mycobacterium tuberculosis clinical and laboratory strains.</title>
        <authorList>
            <person name="Fleischmann R.D."/>
            <person name="Alland D."/>
            <person name="Eisen J.A."/>
            <person name="Carpenter L."/>
            <person name="White O."/>
            <person name="Peterson J.D."/>
            <person name="DeBoy R.T."/>
            <person name="Dodson R.J."/>
            <person name="Gwinn M.L."/>
            <person name="Haft D.H."/>
            <person name="Hickey E.K."/>
            <person name="Kolonay J.F."/>
            <person name="Nelson W.C."/>
            <person name="Umayam L.A."/>
            <person name="Ermolaeva M.D."/>
            <person name="Salzberg S.L."/>
            <person name="Delcher A."/>
            <person name="Utterback T.R."/>
            <person name="Weidman J.F."/>
            <person name="Khouri H.M."/>
            <person name="Gill J."/>
            <person name="Mikula A."/>
            <person name="Bishai W."/>
            <person name="Jacobs W.R. Jr."/>
            <person name="Venter J.C."/>
            <person name="Fraser C.M."/>
        </authorList>
    </citation>
    <scope>NUCLEOTIDE SEQUENCE [LARGE SCALE GENOMIC DNA]</scope>
    <source>
        <strain>CDC 1551 / Oshkosh</strain>
    </source>
</reference>
<comment type="subcellular location">
    <subcellularLocation>
        <location evidence="2">Cell membrane</location>
        <topology evidence="2">Multi-pass membrane protein</topology>
    </subcellularLocation>
</comment>
<accession>P9WLG2</accession>
<accession>L0TC00</accession>
<accession>P64961</accession>
<accession>Q50697</accession>
<evidence type="ECO:0000255" key="1"/>
<evidence type="ECO:0000305" key="2"/>
<organism>
    <name type="scientific">Mycobacterium tuberculosis (strain CDC 1551 / Oshkosh)</name>
    <dbReference type="NCBI Taxonomy" id="83331"/>
    <lineage>
        <taxon>Bacteria</taxon>
        <taxon>Bacillati</taxon>
        <taxon>Actinomycetota</taxon>
        <taxon>Actinomycetes</taxon>
        <taxon>Mycobacteriales</taxon>
        <taxon>Mycobacteriaceae</taxon>
        <taxon>Mycobacterium</taxon>
        <taxon>Mycobacterium tuberculosis complex</taxon>
    </lineage>
</organism>
<keyword id="KW-1003">Cell membrane</keyword>
<keyword id="KW-0472">Membrane</keyword>
<keyword id="KW-1185">Reference proteome</keyword>
<keyword id="KW-0812">Transmembrane</keyword>
<keyword id="KW-1133">Transmembrane helix</keyword>
<protein>
    <recommendedName>
        <fullName>Uncharacterized protein MT2327</fullName>
    </recommendedName>
</protein>
<proteinExistence type="predicted"/>
<name>Y2265_MYCTO</name>
<gene>
    <name type="ordered locus">MT2327</name>
</gene>
<sequence>MGANGDVALSRIGATRPALSAWRFVTVFGVVGLLADVVYEGARSITGPLLASLGATGLVVGVVTGVGEAAALGLRLVSGPLADRSRRFWAWTIAGYTLTVVTVPLLGIAGALWVACALVIAERVGKAVRGPAKDTLLSHAASVTGRGRGFAVHEALDQVGAMIGPLTVAGMLAITGNAYAPALGVLTLPGGAALALLLWLQRRVPRPESYEDCPVVLGNPSAPRPWALPAQFWLYCGFTAITMLGFGTFGLLSFHMVSHGVLAAAMVPVVYAAAMAADALTALASGFSYDRYGAKTLAVLPILSILVVLFAFTDNVTMVVIGTLVWGAAVGIQESTLRGVVADLVASPRRASAYGVFAAGLGAATAGGGALIGWLYDISIGTLVVVVIALELMALVMMFAIRLPRVAPS</sequence>